<proteinExistence type="predicted"/>
<feature type="chain" id="PRO_0000186862" description="Uncharacterized protein aq_460">
    <location>
        <begin position="1"/>
        <end position="203"/>
    </location>
</feature>
<dbReference type="EMBL" id="AE000657">
    <property type="protein sequence ID" value="AAC06728.1"/>
    <property type="molecule type" value="Genomic_DNA"/>
</dbReference>
<dbReference type="PIR" id="A70342">
    <property type="entry name" value="A70342"/>
</dbReference>
<dbReference type="RefSeq" id="NP_213325.1">
    <property type="nucleotide sequence ID" value="NC_000918.1"/>
</dbReference>
<dbReference type="RefSeq" id="WP_010880263.1">
    <property type="nucleotide sequence ID" value="NC_000918.1"/>
</dbReference>
<dbReference type="SMR" id="O66765"/>
<dbReference type="STRING" id="224324.aq_460"/>
<dbReference type="EnsemblBacteria" id="AAC06728">
    <property type="protein sequence ID" value="AAC06728"/>
    <property type="gene ID" value="aq_460"/>
</dbReference>
<dbReference type="KEGG" id="aae:aq_460"/>
<dbReference type="HOGENOM" id="CLU_1359858_0_0_0"/>
<dbReference type="InParanoid" id="O66765"/>
<dbReference type="OrthoDB" id="12984at2"/>
<dbReference type="Proteomes" id="UP000000798">
    <property type="component" value="Chromosome"/>
</dbReference>
<dbReference type="Gene3D" id="1.25.40.10">
    <property type="entry name" value="Tetratricopeptide repeat domain"/>
    <property type="match status" value="1"/>
</dbReference>
<dbReference type="InterPro" id="IPR011990">
    <property type="entry name" value="TPR-like_helical_dom_sf"/>
</dbReference>
<dbReference type="SUPFAM" id="SSF48452">
    <property type="entry name" value="TPR-like"/>
    <property type="match status" value="1"/>
</dbReference>
<sequence length="203" mass="24236">MIGRVFRIFREKGGILKALGLWEWYENLPHKYQKKVKHYYSLKTIKSINFPYKAKHFDTGEVENVLYTKRTFLGTIAQTALLEGDLEFAEWLYNEALKMEGSPYEAHLILNDLVLLAQKQRDLEKVKKYVLQDVELYPEYKEELKSRWGGTLPQIMAFEIYVYLLEREGKIKEALELVEWIKKEGITYPYYDQVKERLLQKLK</sequence>
<accession>O66765</accession>
<organism>
    <name type="scientific">Aquifex aeolicus (strain VF5)</name>
    <dbReference type="NCBI Taxonomy" id="224324"/>
    <lineage>
        <taxon>Bacteria</taxon>
        <taxon>Pseudomonadati</taxon>
        <taxon>Aquificota</taxon>
        <taxon>Aquificia</taxon>
        <taxon>Aquificales</taxon>
        <taxon>Aquificaceae</taxon>
        <taxon>Aquifex</taxon>
    </lineage>
</organism>
<protein>
    <recommendedName>
        <fullName>Uncharacterized protein aq_460</fullName>
    </recommendedName>
</protein>
<keyword id="KW-1185">Reference proteome</keyword>
<gene>
    <name type="ordered locus">aq_460</name>
</gene>
<reference key="1">
    <citation type="journal article" date="1998" name="Nature">
        <title>The complete genome of the hyperthermophilic bacterium Aquifex aeolicus.</title>
        <authorList>
            <person name="Deckert G."/>
            <person name="Warren P.V."/>
            <person name="Gaasterland T."/>
            <person name="Young W.G."/>
            <person name="Lenox A.L."/>
            <person name="Graham D.E."/>
            <person name="Overbeek R."/>
            <person name="Snead M.A."/>
            <person name="Keller M."/>
            <person name="Aujay M."/>
            <person name="Huber R."/>
            <person name="Feldman R.A."/>
            <person name="Short J.M."/>
            <person name="Olsen G.J."/>
            <person name="Swanson R.V."/>
        </authorList>
    </citation>
    <scope>NUCLEOTIDE SEQUENCE [LARGE SCALE GENOMIC DNA]</scope>
    <source>
        <strain>VF5</strain>
    </source>
</reference>
<name>Y460_AQUAE</name>